<feature type="signal peptide" evidence="1">
    <location>
        <begin position="1"/>
        <end position="17"/>
    </location>
</feature>
<feature type="chain" id="PRO_0000042190" description="Complement C1r subcomponent">
    <location>
        <begin position="18"/>
        <end position="705"/>
    </location>
</feature>
<feature type="chain" id="PRO_0000042191" description="Complement C1r subcomponent heavy chain" evidence="1">
    <location>
        <begin position="18"/>
        <end position="463"/>
    </location>
</feature>
<feature type="chain" id="PRO_0000042192" description="Complement C1r subcomponent light chain" evidence="1">
    <location>
        <begin position="464"/>
        <end position="705"/>
    </location>
</feature>
<feature type="domain" description="CUB 1" evidence="3">
    <location>
        <begin position="18"/>
        <end position="141"/>
    </location>
</feature>
<feature type="domain" description="EGF-like; calcium-binding" evidence="2">
    <location>
        <begin position="142"/>
        <end position="190"/>
    </location>
</feature>
<feature type="domain" description="CUB 2" evidence="3">
    <location>
        <begin position="193"/>
        <end position="305"/>
    </location>
</feature>
<feature type="domain" description="Sushi 1" evidence="5">
    <location>
        <begin position="307"/>
        <end position="373"/>
    </location>
</feature>
<feature type="domain" description="Sushi 2" evidence="5">
    <location>
        <begin position="374"/>
        <end position="449"/>
    </location>
</feature>
<feature type="domain" description="Peptidase S1" evidence="4">
    <location>
        <begin position="464"/>
        <end position="702"/>
    </location>
</feature>
<feature type="active site" description="Charge relay system" evidence="1">
    <location>
        <position position="502"/>
    </location>
</feature>
<feature type="active site" description="Charge relay system" evidence="1">
    <location>
        <position position="557"/>
    </location>
</feature>
<feature type="active site" description="Charge relay system" evidence="1">
    <location>
        <position position="654"/>
    </location>
</feature>
<feature type="binding site" evidence="1">
    <location>
        <position position="66"/>
    </location>
    <ligand>
        <name>Ca(2+)</name>
        <dbReference type="ChEBI" id="CHEBI:29108"/>
        <label>1</label>
    </ligand>
</feature>
<feature type="binding site" evidence="1">
    <location>
        <position position="74"/>
    </location>
    <ligand>
        <name>Ca(2+)</name>
        <dbReference type="ChEBI" id="CHEBI:29108"/>
        <label>1</label>
    </ligand>
</feature>
<feature type="binding site" evidence="1">
    <location>
        <position position="119"/>
    </location>
    <ligand>
        <name>Ca(2+)</name>
        <dbReference type="ChEBI" id="CHEBI:29108"/>
        <label>1</label>
    </ligand>
</feature>
<feature type="binding site" evidence="1">
    <location>
        <position position="142"/>
    </location>
    <ligand>
        <name>Ca(2+)</name>
        <dbReference type="ChEBI" id="CHEBI:29108"/>
        <label>2</label>
    </ligand>
</feature>
<feature type="binding site" evidence="1">
    <location>
        <position position="143"/>
    </location>
    <ligand>
        <name>Ca(2+)</name>
        <dbReference type="ChEBI" id="CHEBI:29108"/>
        <label>2</label>
    </ligand>
</feature>
<feature type="binding site" evidence="1">
    <location>
        <position position="145"/>
    </location>
    <ligand>
        <name>Ca(2+)</name>
        <dbReference type="ChEBI" id="CHEBI:29108"/>
        <label>2</label>
    </ligand>
</feature>
<feature type="binding site" evidence="1">
    <location>
        <position position="167"/>
    </location>
    <ligand>
        <name>Ca(2+)</name>
        <dbReference type="ChEBI" id="CHEBI:29108"/>
        <label>2</label>
    </ligand>
</feature>
<feature type="binding site" evidence="1">
    <location>
        <position position="168"/>
    </location>
    <ligand>
        <name>Ca(2+)</name>
        <dbReference type="ChEBI" id="CHEBI:29108"/>
        <label>2</label>
    </ligand>
</feature>
<feature type="binding site" evidence="1">
    <location>
        <position position="171"/>
    </location>
    <ligand>
        <name>Ca(2+)</name>
        <dbReference type="ChEBI" id="CHEBI:29108"/>
        <label>2</label>
    </ligand>
</feature>
<feature type="binding site" evidence="1">
    <location>
        <position position="243"/>
    </location>
    <ligand>
        <name>Ca(2+)</name>
        <dbReference type="ChEBI" id="CHEBI:29108"/>
        <label>3</label>
    </ligand>
</feature>
<feature type="binding site" evidence="1">
    <location>
        <position position="253"/>
    </location>
    <ligand>
        <name>Ca(2+)</name>
        <dbReference type="ChEBI" id="CHEBI:29108"/>
        <label>3</label>
    </ligand>
</feature>
<feature type="binding site" evidence="1">
    <location>
        <position position="290"/>
    </location>
    <ligand>
        <name>Ca(2+)</name>
        <dbReference type="ChEBI" id="CHEBI:29108"/>
        <label>3</label>
    </ligand>
</feature>
<feature type="binding site" evidence="1">
    <location>
        <position position="294"/>
    </location>
    <ligand>
        <name>Ca(2+)</name>
        <dbReference type="ChEBI" id="CHEBI:29108"/>
        <label>3</label>
    </ligand>
</feature>
<feature type="site" description="Cleavage; by autolysis" evidence="1">
    <location>
        <begin position="463"/>
        <end position="464"/>
    </location>
</feature>
<feature type="modified residue" description="(3R)-3-hydroxyasparagine" evidence="1">
    <location>
        <position position="167"/>
    </location>
</feature>
<feature type="modified residue" description="Phosphoserine; by CK2" evidence="1">
    <location>
        <position position="206"/>
    </location>
</feature>
<feature type="glycosylation site" description="N-linked (GlcNAc...) asparagine" evidence="2">
    <location>
        <position position="125"/>
    </location>
</feature>
<feature type="glycosylation site" description="N-linked (GlcNAc...) asparagine" evidence="2">
    <location>
        <position position="221"/>
    </location>
</feature>
<feature type="glycosylation site" description="N-linked (GlcNAc...) asparagine" evidence="2">
    <location>
        <position position="514"/>
    </location>
</feature>
<feature type="glycosylation site" description="N-linked (GlcNAc...) asparagine" evidence="2">
    <location>
        <position position="581"/>
    </location>
</feature>
<feature type="disulfide bond" evidence="1">
    <location>
        <begin position="71"/>
        <end position="89"/>
    </location>
</feature>
<feature type="disulfide bond" evidence="1">
    <location>
        <begin position="146"/>
        <end position="165"/>
    </location>
</feature>
<feature type="disulfide bond" evidence="1">
    <location>
        <begin position="161"/>
        <end position="174"/>
    </location>
</feature>
<feature type="disulfide bond" evidence="1">
    <location>
        <begin position="176"/>
        <end position="189"/>
    </location>
</feature>
<feature type="disulfide bond" evidence="1">
    <location>
        <begin position="193"/>
        <end position="220"/>
    </location>
</feature>
<feature type="disulfide bond" evidence="1">
    <location>
        <begin position="250"/>
        <end position="268"/>
    </location>
</feature>
<feature type="disulfide bond" evidence="1">
    <location>
        <begin position="309"/>
        <end position="358"/>
    </location>
</feature>
<feature type="disulfide bond" evidence="1">
    <location>
        <begin position="338"/>
        <end position="371"/>
    </location>
</feature>
<feature type="disulfide bond" evidence="1">
    <location>
        <begin position="376"/>
        <end position="429"/>
    </location>
</feature>
<feature type="disulfide bond" evidence="1">
    <location>
        <begin position="406"/>
        <end position="447"/>
    </location>
</feature>
<feature type="disulfide bond" description="Interchain (between heavy and light chains)" evidence="3 4 5">
    <location>
        <begin position="451"/>
        <end position="577"/>
    </location>
</feature>
<feature type="disulfide bond" evidence="1">
    <location>
        <begin position="620"/>
        <end position="639"/>
    </location>
</feature>
<feature type="disulfide bond" evidence="1">
    <location>
        <begin position="650"/>
        <end position="680"/>
    </location>
</feature>
<comment type="function">
    <text evidence="1">Serine protease component of the complement C1 complex, a multiprotein complex that initiates the classical pathway of the complement system, a cascade of proteins that leads to phagocytosis and breakdown of pathogens and signaling that strengthens the adaptive immune system. C1R catalyzes the first enzymatic step in the classical complement pathway: it is activated by the C1Q subcomplex of the C1 complex, which associates with IgG or IgM immunoglobulins complexed with antigens to form antigen-antibody complexes on the surface of pathogens. Immunoglobulin-binding promotes the autocatalytic cleavage and activation of C1R. Activated C1R then cleaves and activates C1S, the second protease of the classical complement pathway. It is unclear if C1R activates C1S within single, strained C1 complexes or between neighboring C1 complexes on surfaces.</text>
</comment>
<comment type="catalytic activity">
    <reaction evidence="1">
        <text>Selective cleavage of Lys(or Arg)-|-Ile bond in complement subcomponent C1s to form the active form of C1s (EC 3.4.21.42).</text>
        <dbReference type="EC" id="3.4.21.41"/>
    </reaction>
</comment>
<comment type="activity regulation">
    <text evidence="1">Activated by the C1Q subcomplex of the C1 complex following C1Q binding to immunoglobulins (IgG or IgM) complexed with antigens to form antigen-antibody complexes on the surface of pathogens. Immunoglobulin-binding promotes autoactivation of C1R, which results in the cleavage of the Arg-Ile bond in the catalytic domain.</text>
</comment>
<comment type="subunit">
    <text evidence="1">Core component of the complement C1 complex, a calcium-dependent complex composed of 1 molecule of the C1Q subcomplex, 2 molecules of C1R and 2 molecules of C1S. The C1Q subcomplex is composed 18 subunits: 3 chains of C1QA, C1QB, and C1QC trimerize to form 6 collagen-like triple helices connected to six globular ligand-recognition modules. Within the C1 complex, C1R is a dimer of identical chains, each of which is activated by cleavage into two chains, heavy and light, connected by disulfide bonds.</text>
</comment>
<comment type="subcellular location">
    <subcellularLocation>
        <location evidence="1">Secreted</location>
    </subcellularLocation>
    <subcellularLocation>
        <location evidence="1">Cell surface</location>
    </subcellularLocation>
    <text evidence="1">Recruited to the surface of pathogens by the C1Q subcomplex.</text>
</comment>
<comment type="domain">
    <text evidence="1">The CUB domain 2 shows a compact folded structure in the presence of Ca(2+), whereas it has a flexible, disordered conformation in the absence of Ca(2+). Ca(2+) could provide a switch between the folded and disordered forms; low Ca(2+) could provide flexibility to promote autoprocessing and activation of CIR.</text>
</comment>
<comment type="PTM">
    <text evidence="1">Cleaved and activated by autocatalytic processing to generate Complement C1r subcomponent heavy and light chains that are connected by disulfide bonds.</text>
</comment>
<comment type="PTM">
    <text evidence="1">The iron and 2-oxoglutarate dependent 3-hydroxylation of aspartate and asparagine is (R) stereospecific within EGF domains.</text>
</comment>
<comment type="similarity">
    <text evidence="4">Belongs to the peptidase S1 family.</text>
</comment>
<evidence type="ECO:0000250" key="1">
    <source>
        <dbReference type="UniProtKB" id="P00736"/>
    </source>
</evidence>
<evidence type="ECO:0000255" key="2"/>
<evidence type="ECO:0000255" key="3">
    <source>
        <dbReference type="PROSITE-ProRule" id="PRU00059"/>
    </source>
</evidence>
<evidence type="ECO:0000255" key="4">
    <source>
        <dbReference type="PROSITE-ProRule" id="PRU00274"/>
    </source>
</evidence>
<evidence type="ECO:0000255" key="5">
    <source>
        <dbReference type="PROSITE-ProRule" id="PRU00302"/>
    </source>
</evidence>
<gene>
    <name type="primary">C1R</name>
</gene>
<proteinExistence type="evidence at transcript level"/>
<dbReference type="EC" id="3.4.21.41" evidence="1"/>
<dbReference type="EMBL" id="CR861030">
    <property type="protein sequence ID" value="CAH93122.1"/>
    <property type="molecule type" value="mRNA"/>
</dbReference>
<dbReference type="RefSeq" id="NP_001126847.1">
    <property type="nucleotide sequence ID" value="NM_001133375.1"/>
</dbReference>
<dbReference type="SMR" id="Q5R544"/>
<dbReference type="FunCoup" id="Q5R544">
    <property type="interactions" value="419"/>
</dbReference>
<dbReference type="STRING" id="9601.ENSPPYP00000004809"/>
<dbReference type="MEROPS" id="S01.192"/>
<dbReference type="GlyCosmos" id="Q5R544">
    <property type="glycosylation" value="4 sites, No reported glycans"/>
</dbReference>
<dbReference type="GeneID" id="100173855"/>
<dbReference type="KEGG" id="pon:100173855"/>
<dbReference type="CTD" id="715"/>
<dbReference type="eggNOG" id="KOG3627">
    <property type="taxonomic scope" value="Eukaryota"/>
</dbReference>
<dbReference type="InParanoid" id="Q5R544"/>
<dbReference type="OrthoDB" id="6261922at2759"/>
<dbReference type="Proteomes" id="UP000001595">
    <property type="component" value="Unplaced"/>
</dbReference>
<dbReference type="GO" id="GO:0072562">
    <property type="term" value="C:blood microparticle"/>
    <property type="evidence" value="ECO:0007669"/>
    <property type="project" value="TreeGrafter"/>
</dbReference>
<dbReference type="GO" id="GO:0005509">
    <property type="term" value="F:calcium ion binding"/>
    <property type="evidence" value="ECO:0007669"/>
    <property type="project" value="InterPro"/>
</dbReference>
<dbReference type="GO" id="GO:0004252">
    <property type="term" value="F:serine-type endopeptidase activity"/>
    <property type="evidence" value="ECO:0007669"/>
    <property type="project" value="UniProtKB-EC"/>
</dbReference>
<dbReference type="GO" id="GO:0006958">
    <property type="term" value="P:complement activation, classical pathway"/>
    <property type="evidence" value="ECO:0007669"/>
    <property type="project" value="UniProtKB-KW"/>
</dbReference>
<dbReference type="GO" id="GO:0045087">
    <property type="term" value="P:innate immune response"/>
    <property type="evidence" value="ECO:0007669"/>
    <property type="project" value="UniProtKB-KW"/>
</dbReference>
<dbReference type="GO" id="GO:0031638">
    <property type="term" value="P:zymogen activation"/>
    <property type="evidence" value="ECO:0007669"/>
    <property type="project" value="TreeGrafter"/>
</dbReference>
<dbReference type="CDD" id="cd00033">
    <property type="entry name" value="CCP"/>
    <property type="match status" value="2"/>
</dbReference>
<dbReference type="CDD" id="cd00041">
    <property type="entry name" value="CUB"/>
    <property type="match status" value="2"/>
</dbReference>
<dbReference type="CDD" id="cd00054">
    <property type="entry name" value="EGF_CA"/>
    <property type="match status" value="1"/>
</dbReference>
<dbReference type="CDD" id="cd00190">
    <property type="entry name" value="Tryp_SPc"/>
    <property type="match status" value="1"/>
</dbReference>
<dbReference type="FunFam" id="2.10.25.10:FF:000419">
    <property type="entry name" value="Complement C1r subcomponent"/>
    <property type="match status" value="1"/>
</dbReference>
<dbReference type="FunFam" id="2.10.70.10:FF:000040">
    <property type="entry name" value="Complement C1r subcomponent"/>
    <property type="match status" value="1"/>
</dbReference>
<dbReference type="FunFam" id="2.40.10.10:FF:000037">
    <property type="entry name" value="Complement C1r subcomponent"/>
    <property type="match status" value="1"/>
</dbReference>
<dbReference type="FunFam" id="2.40.10.10:FF:000054">
    <property type="entry name" value="Complement C1r subcomponent"/>
    <property type="match status" value="1"/>
</dbReference>
<dbReference type="FunFam" id="2.60.120.290:FF:000028">
    <property type="entry name" value="Complement C1r subcomponent"/>
    <property type="match status" value="1"/>
</dbReference>
<dbReference type="FunFam" id="2.10.70.10:FF:000016">
    <property type="entry name" value="Mannan-binding lectin serine protease 1"/>
    <property type="match status" value="1"/>
</dbReference>
<dbReference type="FunFam" id="2.60.120.290:FF:000006">
    <property type="entry name" value="Mannan-binding lectin serine protease 1"/>
    <property type="match status" value="1"/>
</dbReference>
<dbReference type="Gene3D" id="2.10.70.10">
    <property type="entry name" value="Complement Module, domain 1"/>
    <property type="match status" value="2"/>
</dbReference>
<dbReference type="Gene3D" id="2.10.25.10">
    <property type="entry name" value="Laminin"/>
    <property type="match status" value="1"/>
</dbReference>
<dbReference type="Gene3D" id="2.60.120.290">
    <property type="entry name" value="Spermadhesin, CUB domain"/>
    <property type="match status" value="2"/>
</dbReference>
<dbReference type="Gene3D" id="2.40.10.10">
    <property type="entry name" value="Trypsin-like serine proteases"/>
    <property type="match status" value="3"/>
</dbReference>
<dbReference type="InterPro" id="IPR000859">
    <property type="entry name" value="CUB_dom"/>
</dbReference>
<dbReference type="InterPro" id="IPR001881">
    <property type="entry name" value="EGF-like_Ca-bd_dom"/>
</dbReference>
<dbReference type="InterPro" id="IPR000742">
    <property type="entry name" value="EGF-like_dom"/>
</dbReference>
<dbReference type="InterPro" id="IPR018097">
    <property type="entry name" value="EGF_Ca-bd_CS"/>
</dbReference>
<dbReference type="InterPro" id="IPR024175">
    <property type="entry name" value="Pept_S1A_C1r/C1S/mannan-bd"/>
</dbReference>
<dbReference type="InterPro" id="IPR009003">
    <property type="entry name" value="Peptidase_S1_PA"/>
</dbReference>
<dbReference type="InterPro" id="IPR043504">
    <property type="entry name" value="Peptidase_S1_PA_chymotrypsin"/>
</dbReference>
<dbReference type="InterPro" id="IPR001314">
    <property type="entry name" value="Peptidase_S1A"/>
</dbReference>
<dbReference type="InterPro" id="IPR035914">
    <property type="entry name" value="Sperma_CUB_dom_sf"/>
</dbReference>
<dbReference type="InterPro" id="IPR035976">
    <property type="entry name" value="Sushi/SCR/CCP_sf"/>
</dbReference>
<dbReference type="InterPro" id="IPR000436">
    <property type="entry name" value="Sushi_SCR_CCP_dom"/>
</dbReference>
<dbReference type="InterPro" id="IPR001254">
    <property type="entry name" value="Trypsin_dom"/>
</dbReference>
<dbReference type="InterPro" id="IPR033116">
    <property type="entry name" value="TRYPSIN_SER"/>
</dbReference>
<dbReference type="PANTHER" id="PTHR24255:SF25">
    <property type="entry name" value="COMPLEMENT C1R SUBCOMPONENT"/>
    <property type="match status" value="1"/>
</dbReference>
<dbReference type="PANTHER" id="PTHR24255">
    <property type="entry name" value="COMPLEMENT COMPONENT 1, S SUBCOMPONENT-RELATED"/>
    <property type="match status" value="1"/>
</dbReference>
<dbReference type="Pfam" id="PF00431">
    <property type="entry name" value="CUB"/>
    <property type="match status" value="2"/>
</dbReference>
<dbReference type="Pfam" id="PF14670">
    <property type="entry name" value="FXa_inhibition"/>
    <property type="match status" value="1"/>
</dbReference>
<dbReference type="Pfam" id="PF00084">
    <property type="entry name" value="Sushi"/>
    <property type="match status" value="2"/>
</dbReference>
<dbReference type="Pfam" id="PF00089">
    <property type="entry name" value="Trypsin"/>
    <property type="match status" value="1"/>
</dbReference>
<dbReference type="PIRSF" id="PIRSF001155">
    <property type="entry name" value="C1r_C1s_MASP"/>
    <property type="match status" value="1"/>
</dbReference>
<dbReference type="PRINTS" id="PR00722">
    <property type="entry name" value="CHYMOTRYPSIN"/>
</dbReference>
<dbReference type="SMART" id="SM00032">
    <property type="entry name" value="CCP"/>
    <property type="match status" value="2"/>
</dbReference>
<dbReference type="SMART" id="SM00042">
    <property type="entry name" value="CUB"/>
    <property type="match status" value="2"/>
</dbReference>
<dbReference type="SMART" id="SM00181">
    <property type="entry name" value="EGF"/>
    <property type="match status" value="1"/>
</dbReference>
<dbReference type="SMART" id="SM00179">
    <property type="entry name" value="EGF_CA"/>
    <property type="match status" value="1"/>
</dbReference>
<dbReference type="SMART" id="SM00020">
    <property type="entry name" value="Tryp_SPc"/>
    <property type="match status" value="1"/>
</dbReference>
<dbReference type="SUPFAM" id="SSF57535">
    <property type="entry name" value="Complement control module/SCR domain"/>
    <property type="match status" value="2"/>
</dbReference>
<dbReference type="SUPFAM" id="SSF57196">
    <property type="entry name" value="EGF/Laminin"/>
    <property type="match status" value="1"/>
</dbReference>
<dbReference type="SUPFAM" id="SSF49854">
    <property type="entry name" value="Spermadhesin, CUB domain"/>
    <property type="match status" value="2"/>
</dbReference>
<dbReference type="SUPFAM" id="SSF50494">
    <property type="entry name" value="Trypsin-like serine proteases"/>
    <property type="match status" value="1"/>
</dbReference>
<dbReference type="PROSITE" id="PS00010">
    <property type="entry name" value="ASX_HYDROXYL"/>
    <property type="match status" value="1"/>
</dbReference>
<dbReference type="PROSITE" id="PS01180">
    <property type="entry name" value="CUB"/>
    <property type="match status" value="2"/>
</dbReference>
<dbReference type="PROSITE" id="PS01186">
    <property type="entry name" value="EGF_2"/>
    <property type="match status" value="1"/>
</dbReference>
<dbReference type="PROSITE" id="PS01187">
    <property type="entry name" value="EGF_CA"/>
    <property type="match status" value="1"/>
</dbReference>
<dbReference type="PROSITE" id="PS50923">
    <property type="entry name" value="SUSHI"/>
    <property type="match status" value="2"/>
</dbReference>
<dbReference type="PROSITE" id="PS50240">
    <property type="entry name" value="TRYPSIN_DOM"/>
    <property type="match status" value="1"/>
</dbReference>
<dbReference type="PROSITE" id="PS00135">
    <property type="entry name" value="TRYPSIN_SER"/>
    <property type="match status" value="1"/>
</dbReference>
<protein>
    <recommendedName>
        <fullName>Complement C1r subcomponent</fullName>
        <ecNumber evidence="1">3.4.21.41</ecNumber>
    </recommendedName>
    <alternativeName>
        <fullName>Complement component 1 subcomponent r</fullName>
    </alternativeName>
    <component>
        <recommendedName>
            <fullName>Complement C1r subcomponent heavy chain</fullName>
        </recommendedName>
    </component>
    <component>
        <recommendedName>
            <fullName>Complement C1r subcomponent light chain</fullName>
        </recommendedName>
    </component>
</protein>
<reference key="1">
    <citation type="submission" date="2004-11" db="EMBL/GenBank/DDBJ databases">
        <authorList>
            <consortium name="The German cDNA consortium"/>
        </authorList>
    </citation>
    <scope>NUCLEOTIDE SEQUENCE [LARGE SCALE MRNA]</scope>
    <source>
        <tissue>Liver</tissue>
    </source>
</reference>
<keyword id="KW-0068">Autocatalytic cleavage</keyword>
<keyword id="KW-0106">Calcium</keyword>
<keyword id="KW-0180">Complement pathway</keyword>
<keyword id="KW-1015">Disulfide bond</keyword>
<keyword id="KW-0245">EGF-like domain</keyword>
<keyword id="KW-0325">Glycoprotein</keyword>
<keyword id="KW-0378">Hydrolase</keyword>
<keyword id="KW-0379">Hydroxylation</keyword>
<keyword id="KW-0391">Immunity</keyword>
<keyword id="KW-0399">Innate immunity</keyword>
<keyword id="KW-0479">Metal-binding</keyword>
<keyword id="KW-0597">Phosphoprotein</keyword>
<keyword id="KW-0645">Protease</keyword>
<keyword id="KW-1185">Reference proteome</keyword>
<keyword id="KW-0677">Repeat</keyword>
<keyword id="KW-0964">Secreted</keyword>
<keyword id="KW-0720">Serine protease</keyword>
<keyword id="KW-0732">Signal</keyword>
<keyword id="KW-0768">Sushi</keyword>
<name>C1R_PONAB</name>
<organism>
    <name type="scientific">Pongo abelii</name>
    <name type="common">Sumatran orangutan</name>
    <name type="synonym">Pongo pygmaeus abelii</name>
    <dbReference type="NCBI Taxonomy" id="9601"/>
    <lineage>
        <taxon>Eukaryota</taxon>
        <taxon>Metazoa</taxon>
        <taxon>Chordata</taxon>
        <taxon>Craniata</taxon>
        <taxon>Vertebrata</taxon>
        <taxon>Euteleostomi</taxon>
        <taxon>Mammalia</taxon>
        <taxon>Eutheria</taxon>
        <taxon>Euarchontoglires</taxon>
        <taxon>Primates</taxon>
        <taxon>Haplorrhini</taxon>
        <taxon>Catarrhini</taxon>
        <taxon>Hominidae</taxon>
        <taxon>Pongo</taxon>
    </lineage>
</organism>
<sequence length="705" mass="80064">MWLLYLLVPAMFCRAGGSIPIPQKLFGEVTSPLFPKPYPNNFETTTVITVPTGYRVKLVFQQFDLEPSEGCFYDYVKISADKKSLGRFCGQLGSPLGNPPGKKEFMSQGNKMLLTFHTDFSNEENGTIMFYKGFLAYYQAVDLDECASQSKSGEEDPQPQCQHLCHNYVGGYFCSCLPGYELQKDRHSCQAECSSELYTEASGYISSLEYPRSYPPDLRCNYSIRVERGLTLHLKFLEPFEIDDHQQVHCPYDQLQIYANGKNIGEFCGKQRPPDLDTSSNAVDLLFFTDESGDSRGWNLRYTTEIIKCPQPKTLDEFTIIQNLQPQYQFRDYFIATCKQGYQLIEGNQVLHSFTAVCQDDGTWHRAMPRCKIKDCGQPRNLPNGAFRYTTTMGVNTYKARIQYYCHKPYYKMQTRAGSRESEQGVYTCTAQGIWKNEQKGEKIPRCLPVCGKPVNPVEQRQRIIGGQKAKMGNFPWQVFTNIHGRGGGALLGDRWILTAAHTLYPKEHEAQTNASLDVFLGHTNVEELMKLGNHPIRRVSVHPDYRQDESHNFEGDIALLELENSVTLGPNLLPICLPDNETFYDLGLMGYVSGFGVMEEKIAHDLRFVRLPVANPQACETWLRGKNRMDVFSQNMFCAGHPSLKQDACQGDSGGVFAVRDPNTDRWVATGIVSWGIGCSRGYGFYTKVLNYVDWIKKEMEEED</sequence>
<accession>Q5R544</accession>